<comment type="function">
    <text evidence="1">One of several proteins that assist in the late maturation steps of the functional core of the 30S ribosomal subunit. Associates with free 30S ribosomal subunits (but not with 30S subunits that are part of 70S ribosomes or polysomes). Required for efficient processing of 16S rRNA. May interact with the 5'-terminal helix region of 16S rRNA.</text>
</comment>
<comment type="subunit">
    <text evidence="1">Monomer. Binds 30S ribosomal subunits, but not 50S ribosomal subunits or 70S ribosomes.</text>
</comment>
<comment type="subcellular location">
    <subcellularLocation>
        <location evidence="1">Cytoplasm</location>
    </subcellularLocation>
</comment>
<comment type="similarity">
    <text evidence="1">Belongs to the RbfA family.</text>
</comment>
<comment type="sequence caution" evidence="2">
    <conflict type="erroneous initiation">
        <sequence resource="EMBL-CDS" id="ABN01184"/>
    </conflict>
    <text>Extended N-terminus.</text>
</comment>
<gene>
    <name evidence="1" type="primary">rbfA</name>
    <name type="ordered locus">BMA10229_A0174</name>
</gene>
<reference key="1">
    <citation type="journal article" date="2010" name="Genome Biol. Evol.">
        <title>Continuing evolution of Burkholderia mallei through genome reduction and large-scale rearrangements.</title>
        <authorList>
            <person name="Losada L."/>
            <person name="Ronning C.M."/>
            <person name="DeShazer D."/>
            <person name="Woods D."/>
            <person name="Fedorova N."/>
            <person name="Kim H.S."/>
            <person name="Shabalina S.A."/>
            <person name="Pearson T.R."/>
            <person name="Brinkac L."/>
            <person name="Tan P."/>
            <person name="Nandi T."/>
            <person name="Crabtree J."/>
            <person name="Badger J."/>
            <person name="Beckstrom-Sternberg S."/>
            <person name="Saqib M."/>
            <person name="Schutzer S.E."/>
            <person name="Keim P."/>
            <person name="Nierman W.C."/>
        </authorList>
    </citation>
    <scope>NUCLEOTIDE SEQUENCE [LARGE SCALE GENOMIC DNA]</scope>
    <source>
        <strain>NCTC 10229</strain>
    </source>
</reference>
<organism>
    <name type="scientific">Burkholderia mallei (strain NCTC 10229)</name>
    <dbReference type="NCBI Taxonomy" id="412022"/>
    <lineage>
        <taxon>Bacteria</taxon>
        <taxon>Pseudomonadati</taxon>
        <taxon>Pseudomonadota</taxon>
        <taxon>Betaproteobacteria</taxon>
        <taxon>Burkholderiales</taxon>
        <taxon>Burkholderiaceae</taxon>
        <taxon>Burkholderia</taxon>
        <taxon>pseudomallei group</taxon>
    </lineage>
</organism>
<protein>
    <recommendedName>
        <fullName evidence="1">Ribosome-binding factor A</fullName>
    </recommendedName>
</protein>
<name>RBFA_BURM9</name>
<dbReference type="EMBL" id="CP000546">
    <property type="protein sequence ID" value="ABN01184.1"/>
    <property type="status" value="ALT_INIT"/>
    <property type="molecule type" value="Genomic_DNA"/>
</dbReference>
<dbReference type="RefSeq" id="WP_004199441.1">
    <property type="nucleotide sequence ID" value="NC_008836.1"/>
</dbReference>
<dbReference type="SMR" id="A2S2L0"/>
<dbReference type="GeneID" id="93060074"/>
<dbReference type="KEGG" id="bml:BMA10229_A0174"/>
<dbReference type="HOGENOM" id="CLU_089475_5_1_4"/>
<dbReference type="Proteomes" id="UP000002283">
    <property type="component" value="Chromosome I"/>
</dbReference>
<dbReference type="GO" id="GO:0005829">
    <property type="term" value="C:cytosol"/>
    <property type="evidence" value="ECO:0007669"/>
    <property type="project" value="TreeGrafter"/>
</dbReference>
<dbReference type="GO" id="GO:0043024">
    <property type="term" value="F:ribosomal small subunit binding"/>
    <property type="evidence" value="ECO:0007669"/>
    <property type="project" value="TreeGrafter"/>
</dbReference>
<dbReference type="GO" id="GO:0030490">
    <property type="term" value="P:maturation of SSU-rRNA"/>
    <property type="evidence" value="ECO:0007669"/>
    <property type="project" value="UniProtKB-UniRule"/>
</dbReference>
<dbReference type="Gene3D" id="3.30.300.20">
    <property type="match status" value="1"/>
</dbReference>
<dbReference type="HAMAP" id="MF_00003">
    <property type="entry name" value="RbfA"/>
    <property type="match status" value="1"/>
</dbReference>
<dbReference type="InterPro" id="IPR015946">
    <property type="entry name" value="KH_dom-like_a/b"/>
</dbReference>
<dbReference type="InterPro" id="IPR000238">
    <property type="entry name" value="RbfA"/>
</dbReference>
<dbReference type="InterPro" id="IPR023799">
    <property type="entry name" value="RbfA_dom_sf"/>
</dbReference>
<dbReference type="NCBIfam" id="TIGR00082">
    <property type="entry name" value="rbfA"/>
    <property type="match status" value="1"/>
</dbReference>
<dbReference type="PANTHER" id="PTHR33515">
    <property type="entry name" value="RIBOSOME-BINDING FACTOR A, CHLOROPLASTIC-RELATED"/>
    <property type="match status" value="1"/>
</dbReference>
<dbReference type="PANTHER" id="PTHR33515:SF1">
    <property type="entry name" value="RIBOSOME-BINDING FACTOR A, CHLOROPLASTIC-RELATED"/>
    <property type="match status" value="1"/>
</dbReference>
<dbReference type="Pfam" id="PF02033">
    <property type="entry name" value="RBFA"/>
    <property type="match status" value="1"/>
</dbReference>
<dbReference type="SUPFAM" id="SSF89919">
    <property type="entry name" value="Ribosome-binding factor A, RbfA"/>
    <property type="match status" value="1"/>
</dbReference>
<evidence type="ECO:0000255" key="1">
    <source>
        <dbReference type="HAMAP-Rule" id="MF_00003"/>
    </source>
</evidence>
<evidence type="ECO:0000305" key="2"/>
<proteinExistence type="inferred from homology"/>
<keyword id="KW-0963">Cytoplasm</keyword>
<keyword id="KW-0690">Ribosome biogenesis</keyword>
<sequence length="122" mass="13808">MSKKRSSPNRNVQIADQIQRDLSELIMREVKDPRIGIVTIQSVELTPDYAHAKVYFTALTGTPADTQEALNHAAGHLHNLLFKRLHIHTVPTLHFHYDQTIEKAVAMSRLIDEANATRAKDD</sequence>
<feature type="chain" id="PRO_0000321204" description="Ribosome-binding factor A">
    <location>
        <begin position="1"/>
        <end position="122"/>
    </location>
</feature>
<accession>A2S2L0</accession>